<accession>Q9UVF3</accession>
<accession>Q6C9U6</accession>
<reference key="1">
    <citation type="submission" date="1999-10" db="EMBL/GenBank/DDBJ databases">
        <title>Cloning and characterization of the actin gene from Yarrowia lipolytica.</title>
        <authorList>
            <person name="Blanchin-Roland S."/>
            <person name="Lepingle A."/>
            <person name="Benetti P.H."/>
            <person name="Gaillardin C."/>
        </authorList>
    </citation>
    <scope>NUCLEOTIDE SEQUENCE [GENOMIC DNA]</scope>
</reference>
<reference key="2">
    <citation type="journal article" date="2004" name="Nature">
        <title>Genome evolution in yeasts.</title>
        <authorList>
            <person name="Dujon B."/>
            <person name="Sherman D."/>
            <person name="Fischer G."/>
            <person name="Durrens P."/>
            <person name="Casaregola S."/>
            <person name="Lafontaine I."/>
            <person name="de Montigny J."/>
            <person name="Marck C."/>
            <person name="Neuveglise C."/>
            <person name="Talla E."/>
            <person name="Goffard N."/>
            <person name="Frangeul L."/>
            <person name="Aigle M."/>
            <person name="Anthouard V."/>
            <person name="Babour A."/>
            <person name="Barbe V."/>
            <person name="Barnay S."/>
            <person name="Blanchin S."/>
            <person name="Beckerich J.-M."/>
            <person name="Beyne E."/>
            <person name="Bleykasten C."/>
            <person name="Boisrame A."/>
            <person name="Boyer J."/>
            <person name="Cattolico L."/>
            <person name="Confanioleri F."/>
            <person name="de Daruvar A."/>
            <person name="Despons L."/>
            <person name="Fabre E."/>
            <person name="Fairhead C."/>
            <person name="Ferry-Dumazet H."/>
            <person name="Groppi A."/>
            <person name="Hantraye F."/>
            <person name="Hennequin C."/>
            <person name="Jauniaux N."/>
            <person name="Joyet P."/>
            <person name="Kachouri R."/>
            <person name="Kerrest A."/>
            <person name="Koszul R."/>
            <person name="Lemaire M."/>
            <person name="Lesur I."/>
            <person name="Ma L."/>
            <person name="Muller H."/>
            <person name="Nicaud J.-M."/>
            <person name="Nikolski M."/>
            <person name="Oztas S."/>
            <person name="Ozier-Kalogeropoulos O."/>
            <person name="Pellenz S."/>
            <person name="Potier S."/>
            <person name="Richard G.-F."/>
            <person name="Straub M.-L."/>
            <person name="Suleau A."/>
            <person name="Swennen D."/>
            <person name="Tekaia F."/>
            <person name="Wesolowski-Louvel M."/>
            <person name="Westhof E."/>
            <person name="Wirth B."/>
            <person name="Zeniou-Meyer M."/>
            <person name="Zivanovic Y."/>
            <person name="Bolotin-Fukuhara M."/>
            <person name="Thierry A."/>
            <person name="Bouchier C."/>
            <person name="Caudron B."/>
            <person name="Scarpelli C."/>
            <person name="Gaillardin C."/>
            <person name="Weissenbach J."/>
            <person name="Wincker P."/>
            <person name="Souciet J.-L."/>
        </authorList>
    </citation>
    <scope>NUCLEOTIDE SEQUENCE [LARGE SCALE GENOMIC DNA]</scope>
    <source>
        <strain>CLIB 122 / E 150</strain>
    </source>
</reference>
<evidence type="ECO:0000250" key="1">
    <source>
        <dbReference type="UniProtKB" id="P60010"/>
    </source>
</evidence>
<evidence type="ECO:0000305" key="2"/>
<keyword id="KW-0067">ATP-binding</keyword>
<keyword id="KW-0963">Cytoplasm</keyword>
<keyword id="KW-0206">Cytoskeleton</keyword>
<keyword id="KW-0378">Hydrolase</keyword>
<keyword id="KW-0547">Nucleotide-binding</keyword>
<keyword id="KW-1185">Reference proteome</keyword>
<feature type="chain" id="PRO_0000089050" description="Actin">
    <location>
        <begin position="1"/>
        <end position="375"/>
    </location>
</feature>
<feature type="sequence conflict" description="In Ref. 1; CAB62086." evidence="2" ref="1">
    <original>A</original>
    <variation>G</variation>
    <location>
        <position position="108"/>
    </location>
</feature>
<proteinExistence type="inferred from homology"/>
<protein>
    <recommendedName>
        <fullName>Actin</fullName>
        <ecNumber evidence="1">3.6.4.-</ecNumber>
    </recommendedName>
</protein>
<dbReference type="EC" id="3.6.4.-" evidence="1"/>
<dbReference type="EMBL" id="AJ250347">
    <property type="protein sequence ID" value="CAB62086.1"/>
    <property type="molecule type" value="Genomic_DNA"/>
</dbReference>
<dbReference type="EMBL" id="CR382130">
    <property type="protein sequence ID" value="CAG80754.2"/>
    <property type="molecule type" value="Genomic_DNA"/>
</dbReference>
<dbReference type="RefSeq" id="XP_502566.2">
    <property type="nucleotide sequence ID" value="XM_502566.2"/>
</dbReference>
<dbReference type="SMR" id="Q9UVF3"/>
<dbReference type="FunCoup" id="Q9UVF3">
    <property type="interactions" value="1332"/>
</dbReference>
<dbReference type="STRING" id="284591.Q9UVF3"/>
<dbReference type="EnsemblFungi" id="CAG80754">
    <property type="protein sequence ID" value="CAG80754"/>
    <property type="gene ID" value="YALI0_D08272g"/>
</dbReference>
<dbReference type="KEGG" id="yli:2911067"/>
<dbReference type="VEuPathDB" id="FungiDB:YALI0_D08272g"/>
<dbReference type="HOGENOM" id="CLU_027965_0_2_1"/>
<dbReference type="InParanoid" id="Q9UVF3"/>
<dbReference type="OMA" id="FHTTAER"/>
<dbReference type="OrthoDB" id="5378at4891"/>
<dbReference type="Proteomes" id="UP000001300">
    <property type="component" value="Chromosome D"/>
</dbReference>
<dbReference type="GO" id="GO:0015629">
    <property type="term" value="C:actin cytoskeleton"/>
    <property type="evidence" value="ECO:0000318"/>
    <property type="project" value="GO_Central"/>
</dbReference>
<dbReference type="GO" id="GO:0005737">
    <property type="term" value="C:cytoplasm"/>
    <property type="evidence" value="ECO:0007669"/>
    <property type="project" value="UniProtKB-KW"/>
</dbReference>
<dbReference type="GO" id="GO:0005524">
    <property type="term" value="F:ATP binding"/>
    <property type="evidence" value="ECO:0007669"/>
    <property type="project" value="UniProtKB-KW"/>
</dbReference>
<dbReference type="GO" id="GO:0016787">
    <property type="term" value="F:hydrolase activity"/>
    <property type="evidence" value="ECO:0007669"/>
    <property type="project" value="UniProtKB-KW"/>
</dbReference>
<dbReference type="CDD" id="cd10224">
    <property type="entry name" value="ASKHA_NBD_actin"/>
    <property type="match status" value="1"/>
</dbReference>
<dbReference type="FunFam" id="2.30.36.70:FF:000001">
    <property type="entry name" value="Actin, alpha skeletal muscle"/>
    <property type="match status" value="1"/>
</dbReference>
<dbReference type="FunFam" id="3.30.420.40:FF:000291">
    <property type="entry name" value="Actin, alpha skeletal muscle"/>
    <property type="match status" value="1"/>
</dbReference>
<dbReference type="FunFam" id="3.90.640.10:FF:000001">
    <property type="entry name" value="Actin, muscle"/>
    <property type="match status" value="1"/>
</dbReference>
<dbReference type="FunFam" id="3.30.420.40:FF:000404">
    <property type="entry name" value="Major actin"/>
    <property type="match status" value="1"/>
</dbReference>
<dbReference type="FunFam" id="3.30.420.40:FF:000058">
    <property type="entry name" value="Putative actin-related protein 5"/>
    <property type="match status" value="1"/>
</dbReference>
<dbReference type="Gene3D" id="3.30.420.40">
    <property type="match status" value="2"/>
</dbReference>
<dbReference type="Gene3D" id="3.90.640.10">
    <property type="entry name" value="Actin, Chain A, domain 4"/>
    <property type="match status" value="1"/>
</dbReference>
<dbReference type="InterPro" id="IPR004000">
    <property type="entry name" value="Actin"/>
</dbReference>
<dbReference type="InterPro" id="IPR020902">
    <property type="entry name" value="Actin/actin-like_CS"/>
</dbReference>
<dbReference type="InterPro" id="IPR004001">
    <property type="entry name" value="Actin_CS"/>
</dbReference>
<dbReference type="InterPro" id="IPR043129">
    <property type="entry name" value="ATPase_NBD"/>
</dbReference>
<dbReference type="PANTHER" id="PTHR11937">
    <property type="entry name" value="ACTIN"/>
    <property type="match status" value="1"/>
</dbReference>
<dbReference type="Pfam" id="PF00022">
    <property type="entry name" value="Actin"/>
    <property type="match status" value="1"/>
</dbReference>
<dbReference type="PRINTS" id="PR00190">
    <property type="entry name" value="ACTIN"/>
</dbReference>
<dbReference type="SMART" id="SM00268">
    <property type="entry name" value="ACTIN"/>
    <property type="match status" value="1"/>
</dbReference>
<dbReference type="SUPFAM" id="SSF53067">
    <property type="entry name" value="Actin-like ATPase domain"/>
    <property type="match status" value="2"/>
</dbReference>
<dbReference type="PROSITE" id="PS00406">
    <property type="entry name" value="ACTINS_1"/>
    <property type="match status" value="1"/>
</dbReference>
<dbReference type="PROSITE" id="PS00432">
    <property type="entry name" value="ACTINS_2"/>
    <property type="match status" value="1"/>
</dbReference>
<dbReference type="PROSITE" id="PS01132">
    <property type="entry name" value="ACTINS_ACT_LIKE"/>
    <property type="match status" value="1"/>
</dbReference>
<gene>
    <name type="primary">ACT1</name>
    <name type="ordered locus">YALI0D08272g</name>
</gene>
<comment type="function">
    <text>Actins are highly conserved proteins that are involved in various types of cell motility and are ubiquitously expressed in all eukaryotic cells.</text>
</comment>
<comment type="catalytic activity">
    <reaction evidence="1">
        <text>ATP + H2O = ADP + phosphate + H(+)</text>
        <dbReference type="Rhea" id="RHEA:13065"/>
        <dbReference type="ChEBI" id="CHEBI:15377"/>
        <dbReference type="ChEBI" id="CHEBI:15378"/>
        <dbReference type="ChEBI" id="CHEBI:30616"/>
        <dbReference type="ChEBI" id="CHEBI:43474"/>
        <dbReference type="ChEBI" id="CHEBI:456216"/>
    </reaction>
</comment>
<comment type="subcellular location">
    <subcellularLocation>
        <location>Cytoplasm</location>
        <location>Cytoskeleton</location>
    </subcellularLocation>
</comment>
<comment type="similarity">
    <text evidence="2">Belongs to the actin family.</text>
</comment>
<sequence length="375" mass="41800">MEDETVALVIDNGSGMCKAGFAGDDAPRAVFPSIVGRPRHQGVMVGMGQKDSYVGDEAQSKRGILTLRYPIEHGIVTNWDDMEKIWHHTFYNELRVAPEEHPVLLTEAPINPKSNREKMTQIFFETFNAPAFYVSIQAVLSLYASGRVTGIVLDSGDGVTHVVPIYSGFSLPHAIMRLDMAGRDLTDYLMKILSERGYSFTNSAEREIVRDIKEKLCYVALDFEQELQTASQSSSLEKSYELPDGRVITIGNERFRAPEALFHPSMLGLEAAGIHETTFNSIMKCDVDVRKDLYGNIVMSGGTTMYPGIAERMHKEISALAPTSIKVKITAPLERKYSVWIGGSILASLGTFQQMWISKQEYDEAGPTIVHRKCY</sequence>
<organism>
    <name type="scientific">Yarrowia lipolytica (strain CLIB 122 / E 150)</name>
    <name type="common">Yeast</name>
    <name type="synonym">Candida lipolytica</name>
    <dbReference type="NCBI Taxonomy" id="284591"/>
    <lineage>
        <taxon>Eukaryota</taxon>
        <taxon>Fungi</taxon>
        <taxon>Dikarya</taxon>
        <taxon>Ascomycota</taxon>
        <taxon>Saccharomycotina</taxon>
        <taxon>Dipodascomycetes</taxon>
        <taxon>Dipodascales</taxon>
        <taxon>Dipodascales incertae sedis</taxon>
        <taxon>Yarrowia</taxon>
    </lineage>
</organism>
<name>ACT_YARLI</name>